<comment type="function">
    <text evidence="1">Binds the lower part of the 30S subunit head. Binds mRNA in the 70S ribosome, positioning it for translation.</text>
</comment>
<comment type="subunit">
    <text evidence="1">Part of the 30S ribosomal subunit. Forms a tight complex with proteins S10 and S14.</text>
</comment>
<comment type="similarity">
    <text evidence="1">Belongs to the universal ribosomal protein uS3 family.</text>
</comment>
<sequence>MGQKTHPYGFRLGITKDWKSHWYAERSDYSSLLHEDWAIRNYIKKNYYQAGISLIEIERKAANRVDITIHTARPGMLIGRGGSEIENIRKNLVKLTNKSVFVNVQEVKNPELDAQLVAENIATQIEKRINYKRAMKQAINRALRAGAKGVKVMCSGRLNGAEIARSEWFREGRIPLQTLTADIDYGFAEAFTISGVIGVKVWIYKGDVPELHKEPIQELPEKAVPKKIEDEDLYEKDEVNYDVDA</sequence>
<evidence type="ECO:0000255" key="1">
    <source>
        <dbReference type="HAMAP-Rule" id="MF_01309"/>
    </source>
</evidence>
<evidence type="ECO:0000305" key="2"/>
<feature type="chain" id="PRO_1000140959" description="Small ribosomal subunit protein uS3">
    <location>
        <begin position="1"/>
        <end position="245"/>
    </location>
</feature>
<feature type="domain" description="KH type-2" evidence="1">
    <location>
        <begin position="39"/>
        <end position="108"/>
    </location>
</feature>
<dbReference type="EMBL" id="CP001251">
    <property type="protein sequence ID" value="ACK42267.1"/>
    <property type="molecule type" value="Genomic_DNA"/>
</dbReference>
<dbReference type="RefSeq" id="WP_012583351.1">
    <property type="nucleotide sequence ID" value="NC_011661.1"/>
</dbReference>
<dbReference type="RefSeq" id="YP_002352881.1">
    <property type="nucleotide sequence ID" value="NC_011661.1"/>
</dbReference>
<dbReference type="SMR" id="B8E1D9"/>
<dbReference type="FunCoup" id="B8E1D9">
    <property type="interactions" value="448"/>
</dbReference>
<dbReference type="STRING" id="515635.Dtur_0987"/>
<dbReference type="EnsemblBacteria" id="ACK42267">
    <property type="protein sequence ID" value="ACK42267"/>
    <property type="gene ID" value="Dtur_0987"/>
</dbReference>
<dbReference type="KEGG" id="dtu:Dtur_0987"/>
<dbReference type="PATRIC" id="fig|515635.4.peg.1024"/>
<dbReference type="eggNOG" id="COG0092">
    <property type="taxonomic scope" value="Bacteria"/>
</dbReference>
<dbReference type="HOGENOM" id="CLU_058591_0_2_0"/>
<dbReference type="InParanoid" id="B8E1D9"/>
<dbReference type="OrthoDB" id="9806396at2"/>
<dbReference type="Proteomes" id="UP000007719">
    <property type="component" value="Chromosome"/>
</dbReference>
<dbReference type="GO" id="GO:0022627">
    <property type="term" value="C:cytosolic small ribosomal subunit"/>
    <property type="evidence" value="ECO:0000318"/>
    <property type="project" value="GO_Central"/>
</dbReference>
<dbReference type="GO" id="GO:0003729">
    <property type="term" value="F:mRNA binding"/>
    <property type="evidence" value="ECO:0007669"/>
    <property type="project" value="UniProtKB-UniRule"/>
</dbReference>
<dbReference type="GO" id="GO:0019843">
    <property type="term" value="F:rRNA binding"/>
    <property type="evidence" value="ECO:0007669"/>
    <property type="project" value="UniProtKB-UniRule"/>
</dbReference>
<dbReference type="GO" id="GO:0003735">
    <property type="term" value="F:structural constituent of ribosome"/>
    <property type="evidence" value="ECO:0000318"/>
    <property type="project" value="GO_Central"/>
</dbReference>
<dbReference type="GO" id="GO:0006412">
    <property type="term" value="P:translation"/>
    <property type="evidence" value="ECO:0007669"/>
    <property type="project" value="UniProtKB-UniRule"/>
</dbReference>
<dbReference type="CDD" id="cd02412">
    <property type="entry name" value="KH-II_30S_S3"/>
    <property type="match status" value="1"/>
</dbReference>
<dbReference type="FunFam" id="3.30.1140.32:FF:000006">
    <property type="entry name" value="30S ribosomal protein S3"/>
    <property type="match status" value="1"/>
</dbReference>
<dbReference type="FunFam" id="3.30.300.20:FF:000001">
    <property type="entry name" value="30S ribosomal protein S3"/>
    <property type="match status" value="1"/>
</dbReference>
<dbReference type="Gene3D" id="3.30.300.20">
    <property type="match status" value="1"/>
</dbReference>
<dbReference type="Gene3D" id="3.30.1140.32">
    <property type="entry name" value="Ribosomal protein S3, C-terminal domain"/>
    <property type="match status" value="1"/>
</dbReference>
<dbReference type="HAMAP" id="MF_01309_B">
    <property type="entry name" value="Ribosomal_uS3_B"/>
    <property type="match status" value="1"/>
</dbReference>
<dbReference type="InterPro" id="IPR004087">
    <property type="entry name" value="KH_dom"/>
</dbReference>
<dbReference type="InterPro" id="IPR015946">
    <property type="entry name" value="KH_dom-like_a/b"/>
</dbReference>
<dbReference type="InterPro" id="IPR004044">
    <property type="entry name" value="KH_dom_type_2"/>
</dbReference>
<dbReference type="InterPro" id="IPR009019">
    <property type="entry name" value="KH_sf_prok-type"/>
</dbReference>
<dbReference type="InterPro" id="IPR036419">
    <property type="entry name" value="Ribosomal_S3_C_sf"/>
</dbReference>
<dbReference type="InterPro" id="IPR005704">
    <property type="entry name" value="Ribosomal_uS3_bac-typ"/>
</dbReference>
<dbReference type="InterPro" id="IPR001351">
    <property type="entry name" value="Ribosomal_uS3_C"/>
</dbReference>
<dbReference type="InterPro" id="IPR018280">
    <property type="entry name" value="Ribosomal_uS3_CS"/>
</dbReference>
<dbReference type="NCBIfam" id="TIGR01009">
    <property type="entry name" value="rpsC_bact"/>
    <property type="match status" value="1"/>
</dbReference>
<dbReference type="PANTHER" id="PTHR11760">
    <property type="entry name" value="30S/40S RIBOSOMAL PROTEIN S3"/>
    <property type="match status" value="1"/>
</dbReference>
<dbReference type="PANTHER" id="PTHR11760:SF19">
    <property type="entry name" value="SMALL RIBOSOMAL SUBUNIT PROTEIN US3C"/>
    <property type="match status" value="1"/>
</dbReference>
<dbReference type="Pfam" id="PF07650">
    <property type="entry name" value="KH_2"/>
    <property type="match status" value="1"/>
</dbReference>
<dbReference type="Pfam" id="PF00189">
    <property type="entry name" value="Ribosomal_S3_C"/>
    <property type="match status" value="1"/>
</dbReference>
<dbReference type="SMART" id="SM00322">
    <property type="entry name" value="KH"/>
    <property type="match status" value="1"/>
</dbReference>
<dbReference type="SUPFAM" id="SSF54814">
    <property type="entry name" value="Prokaryotic type KH domain (KH-domain type II)"/>
    <property type="match status" value="1"/>
</dbReference>
<dbReference type="SUPFAM" id="SSF54821">
    <property type="entry name" value="Ribosomal protein S3 C-terminal domain"/>
    <property type="match status" value="1"/>
</dbReference>
<dbReference type="PROSITE" id="PS50823">
    <property type="entry name" value="KH_TYPE_2"/>
    <property type="match status" value="1"/>
</dbReference>
<dbReference type="PROSITE" id="PS00548">
    <property type="entry name" value="RIBOSOMAL_S3"/>
    <property type="match status" value="1"/>
</dbReference>
<proteinExistence type="inferred from homology"/>
<organism>
    <name type="scientific">Dictyoglomus turgidum (strain DSM 6724 / Z-1310)</name>
    <dbReference type="NCBI Taxonomy" id="515635"/>
    <lineage>
        <taxon>Bacteria</taxon>
        <taxon>Pseudomonadati</taxon>
        <taxon>Dictyoglomota</taxon>
        <taxon>Dictyoglomia</taxon>
        <taxon>Dictyoglomales</taxon>
        <taxon>Dictyoglomaceae</taxon>
        <taxon>Dictyoglomus</taxon>
    </lineage>
</organism>
<keyword id="KW-1185">Reference proteome</keyword>
<keyword id="KW-0687">Ribonucleoprotein</keyword>
<keyword id="KW-0689">Ribosomal protein</keyword>
<keyword id="KW-0694">RNA-binding</keyword>
<keyword id="KW-0699">rRNA-binding</keyword>
<protein>
    <recommendedName>
        <fullName evidence="1">Small ribosomal subunit protein uS3</fullName>
    </recommendedName>
    <alternativeName>
        <fullName evidence="2">30S ribosomal protein S3</fullName>
    </alternativeName>
</protein>
<gene>
    <name evidence="1" type="primary">rpsC</name>
    <name type="ordered locus">Dtur_0987</name>
</gene>
<accession>B8E1D9</accession>
<name>RS3_DICTD</name>
<reference key="1">
    <citation type="journal article" date="2016" name="Front. Microbiol.">
        <title>The complete genome sequence of hyperthermophile Dictyoglomus turgidum DSM 6724 reveals a specialized carbohydrate fermentor.</title>
        <authorList>
            <person name="Brumm P.J."/>
            <person name="Gowda K."/>
            <person name="Robb F.T."/>
            <person name="Mead D.A."/>
        </authorList>
    </citation>
    <scope>NUCLEOTIDE SEQUENCE [LARGE SCALE GENOMIC DNA]</scope>
    <source>
        <strain>DSM 6724 / Z-1310</strain>
    </source>
</reference>